<dbReference type="GO" id="GO:0005576">
    <property type="term" value="C:extracellular region"/>
    <property type="evidence" value="ECO:0007669"/>
    <property type="project" value="UniProtKB-SubCell"/>
</dbReference>
<dbReference type="GO" id="GO:0007218">
    <property type="term" value="P:neuropeptide signaling pathway"/>
    <property type="evidence" value="ECO:0007669"/>
    <property type="project" value="UniProtKB-KW"/>
</dbReference>
<dbReference type="InterPro" id="IPR013231">
    <property type="entry name" value="Periviscerokinin"/>
</dbReference>
<dbReference type="Pfam" id="PF08259">
    <property type="entry name" value="Periviscerokin"/>
    <property type="match status" value="1"/>
</dbReference>
<protein>
    <recommendedName>
        <fullName evidence="5">Periviscerokinin-1</fullName>
    </recommendedName>
</protein>
<feature type="peptide" id="PRO_0000395568" description="Periviscerokinin-1" evidence="4">
    <location>
        <begin position="1"/>
        <end position="9"/>
    </location>
</feature>
<feature type="modified residue" description="Pyrrolidone carboxylic acid; partial" evidence="4">
    <location>
        <position position="1"/>
    </location>
</feature>
<feature type="modified residue" description="Valine amide" evidence="4">
    <location>
        <position position="9"/>
    </location>
</feature>
<feature type="unsure residue" description="L or I" evidence="4">
    <location>
        <position position="3"/>
    </location>
</feature>
<feature type="unsure residue" description="I or L" evidence="4">
    <location>
        <position position="4"/>
    </location>
</feature>
<name>PVK1_GONGO</name>
<organism>
    <name type="scientific">Gongylus gongylodes</name>
    <name type="common">Wandering violin mantis</name>
    <dbReference type="NCBI Taxonomy" id="267100"/>
    <lineage>
        <taxon>Eukaryota</taxon>
        <taxon>Metazoa</taxon>
        <taxon>Ecdysozoa</taxon>
        <taxon>Arthropoda</taxon>
        <taxon>Hexapoda</taxon>
        <taxon>Insecta</taxon>
        <taxon>Pterygota</taxon>
        <taxon>Neoptera</taxon>
        <taxon>Polyneoptera</taxon>
        <taxon>Dictyoptera</taxon>
        <taxon>Mantodea</taxon>
        <taxon>Eumantodea</taxon>
        <taxon>Hymenopoidea</taxon>
        <taxon>Empusidae</taxon>
        <taxon>Empusinae</taxon>
        <taxon>Gongylus</taxon>
    </lineage>
</organism>
<keyword id="KW-0027">Amidation</keyword>
<keyword id="KW-0903">Direct protein sequencing</keyword>
<keyword id="KW-0527">Neuropeptide</keyword>
<keyword id="KW-0873">Pyrrolidone carboxylic acid</keyword>
<keyword id="KW-0964">Secreted</keyword>
<evidence type="ECO:0000250" key="1">
    <source>
        <dbReference type="UniProtKB" id="P83923"/>
    </source>
</evidence>
<evidence type="ECO:0000250" key="2">
    <source>
        <dbReference type="UniProtKB" id="P84375"/>
    </source>
</evidence>
<evidence type="ECO:0000255" key="3"/>
<evidence type="ECO:0000269" key="4">
    <source>
    </source>
</evidence>
<evidence type="ECO:0000303" key="5">
    <source>
    </source>
</evidence>
<evidence type="ECO:0000305" key="6"/>
<reference evidence="6" key="1">
    <citation type="journal article" date="2010" name="Peptides">
        <title>CAPA-peptides of praying mantids (Mantodea).</title>
        <authorList>
            <person name="Koehler R."/>
            <person name="Predel R."/>
        </authorList>
    </citation>
    <scope>PROTEIN SEQUENCE</scope>
    <scope>MASS SPECTROMETRY</scope>
    <scope>PYROGLUTAMATE FORMATION AT GLN-1</scope>
    <scope>AMIDATION AT VAL-9</scope>
    <source>
        <tissue evidence="4">Abdominal perisympathetic organs</tissue>
    </source>
</reference>
<proteinExistence type="evidence at protein level"/>
<accession>P86653</accession>
<comment type="function">
    <text evidence="1">Mediates visceral muscle contractile activity (myotropic activity).</text>
</comment>
<comment type="subcellular location">
    <subcellularLocation>
        <location evidence="2">Secreted</location>
    </subcellularLocation>
</comment>
<comment type="mass spectrometry" mass="1025.6" method="MALDI" evidence="4"/>
<comment type="mass spectrometry" mass="1008.6" method="MALDI" evidence="4">
    <text>With pyroglutamate at Gln-1.</text>
</comment>
<comment type="similarity">
    <text evidence="3">Belongs to the periviscerokinin family.</text>
</comment>
<sequence length="9" mass="1026">QGLIPFPRV</sequence>